<gene>
    <name type="ordered locus">C8J_0930</name>
</gene>
<accession>A8FM42</accession>
<feature type="chain" id="PRO_0000394782" description="UPF0763 protein C8J_0930">
    <location>
        <begin position="1"/>
        <end position="163"/>
    </location>
</feature>
<comment type="similarity">
    <text evidence="1">Belongs to the UPF0763 family.</text>
</comment>
<dbReference type="EMBL" id="CP000814">
    <property type="protein sequence ID" value="ABV52529.1"/>
    <property type="molecule type" value="Genomic_DNA"/>
</dbReference>
<dbReference type="RefSeq" id="WP_002853412.1">
    <property type="nucleotide sequence ID" value="NC_009839.1"/>
</dbReference>
<dbReference type="SMR" id="A8FM42"/>
<dbReference type="KEGG" id="cju:C8J_0930"/>
<dbReference type="HOGENOM" id="CLU_120359_1_0_7"/>
<dbReference type="HAMAP" id="MF_02110">
    <property type="entry name" value="UPF0763"/>
    <property type="match status" value="1"/>
</dbReference>
<dbReference type="InterPro" id="IPR019724">
    <property type="entry name" value="UPF0763"/>
</dbReference>
<dbReference type="Pfam" id="PF10788">
    <property type="entry name" value="DUF2603"/>
    <property type="match status" value="1"/>
</dbReference>
<organism>
    <name type="scientific">Campylobacter jejuni subsp. jejuni serotype O:6 (strain 81116 / NCTC 11828)</name>
    <dbReference type="NCBI Taxonomy" id="407148"/>
    <lineage>
        <taxon>Bacteria</taxon>
        <taxon>Pseudomonadati</taxon>
        <taxon>Campylobacterota</taxon>
        <taxon>Epsilonproteobacteria</taxon>
        <taxon>Campylobacterales</taxon>
        <taxon>Campylobacteraceae</taxon>
        <taxon>Campylobacter</taxon>
    </lineage>
</organism>
<sequence length="163" mass="19238">MKELEKYSTCLKRIDEFSQNLGIKKKDRTIFKMKQSENENEKCLVLENGSFDSPEPWFVIDENDEIHTLLSLQSLKNILESLKQSQKENFELRLEKAIYQQIPVDFNDVWTVAMDEIKQKAQNGTMEVSIDLEKLISKIKQEHPNLFVDMQAMIERVNQNERL</sequence>
<name>Y930_CAMJ8</name>
<proteinExistence type="inferred from homology"/>
<protein>
    <recommendedName>
        <fullName evidence="1">UPF0763 protein C8J_0930</fullName>
    </recommendedName>
</protein>
<reference key="1">
    <citation type="journal article" date="2007" name="J. Bacteriol.">
        <title>The complete genome sequence of Campylobacter jejuni strain 81116 (NCTC11828).</title>
        <authorList>
            <person name="Pearson B.M."/>
            <person name="Gaskin D.J.H."/>
            <person name="Segers R.P.A.M."/>
            <person name="Wells J.M."/>
            <person name="Nuijten P.J.M."/>
            <person name="van Vliet A.H.M."/>
        </authorList>
    </citation>
    <scope>NUCLEOTIDE SEQUENCE [LARGE SCALE GENOMIC DNA]</scope>
    <source>
        <strain>81116 / NCTC 11828</strain>
    </source>
</reference>
<evidence type="ECO:0000255" key="1">
    <source>
        <dbReference type="HAMAP-Rule" id="MF_02110"/>
    </source>
</evidence>